<reference key="1">
    <citation type="journal article" date="2009" name="J. Bacteriol.">
        <title>Complete and draft genome sequences of six members of the Aquificales.</title>
        <authorList>
            <person name="Reysenbach A.-L."/>
            <person name="Hamamura N."/>
            <person name="Podar M."/>
            <person name="Griffiths E."/>
            <person name="Ferreira S."/>
            <person name="Hochstein R."/>
            <person name="Heidelberg J."/>
            <person name="Johnson J."/>
            <person name="Mead D."/>
            <person name="Pohorille A."/>
            <person name="Sarmiento M."/>
            <person name="Schweighofer K."/>
            <person name="Seshadri R."/>
            <person name="Voytek M.A."/>
        </authorList>
    </citation>
    <scope>NUCLEOTIDE SEQUENCE [LARGE SCALE GENOMIC DNA]</scope>
    <source>
        <strain>DSM 14350 / EX-H1</strain>
    </source>
</reference>
<proteinExistence type="inferred from homology"/>
<protein>
    <recommendedName>
        <fullName evidence="1">Nucleoid-associated protein PERMA_0533</fullName>
    </recommendedName>
</protein>
<accession>C0QUF7</accession>
<gene>
    <name type="ordered locus">PERMA_0533</name>
</gene>
<comment type="function">
    <text evidence="1">Binds to DNA and alters its conformation. May be involved in regulation of gene expression, nucleoid organization and DNA protection.</text>
</comment>
<comment type="subunit">
    <text evidence="1">Homodimer.</text>
</comment>
<comment type="subcellular location">
    <subcellularLocation>
        <location evidence="1">Cytoplasm</location>
        <location evidence="1">Nucleoid</location>
    </subcellularLocation>
</comment>
<comment type="similarity">
    <text evidence="1">Belongs to the YbaB/EbfC family.</text>
</comment>
<feature type="chain" id="PRO_1000197670" description="Nucleoid-associated protein PERMA_0533">
    <location>
        <begin position="1"/>
        <end position="110"/>
    </location>
</feature>
<name>Y533_PERMH</name>
<keyword id="KW-0963">Cytoplasm</keyword>
<keyword id="KW-0238">DNA-binding</keyword>
<keyword id="KW-1185">Reference proteome</keyword>
<dbReference type="EMBL" id="CP001230">
    <property type="protein sequence ID" value="ACO03420.1"/>
    <property type="molecule type" value="Genomic_DNA"/>
</dbReference>
<dbReference type="RefSeq" id="WP_012675659.1">
    <property type="nucleotide sequence ID" value="NC_012440.1"/>
</dbReference>
<dbReference type="SMR" id="C0QUF7"/>
<dbReference type="STRING" id="123214.PERMA_0533"/>
<dbReference type="PaxDb" id="123214-PERMA_0533"/>
<dbReference type="KEGG" id="pmx:PERMA_0533"/>
<dbReference type="eggNOG" id="COG0718">
    <property type="taxonomic scope" value="Bacteria"/>
</dbReference>
<dbReference type="HOGENOM" id="CLU_140930_0_1_0"/>
<dbReference type="OrthoDB" id="9795263at2"/>
<dbReference type="Proteomes" id="UP000001366">
    <property type="component" value="Chromosome"/>
</dbReference>
<dbReference type="GO" id="GO:0043590">
    <property type="term" value="C:bacterial nucleoid"/>
    <property type="evidence" value="ECO:0007669"/>
    <property type="project" value="UniProtKB-UniRule"/>
</dbReference>
<dbReference type="GO" id="GO:0005829">
    <property type="term" value="C:cytosol"/>
    <property type="evidence" value="ECO:0007669"/>
    <property type="project" value="TreeGrafter"/>
</dbReference>
<dbReference type="GO" id="GO:0003677">
    <property type="term" value="F:DNA binding"/>
    <property type="evidence" value="ECO:0007669"/>
    <property type="project" value="UniProtKB-UniRule"/>
</dbReference>
<dbReference type="Gene3D" id="3.30.1310.10">
    <property type="entry name" value="Nucleoid-associated protein YbaB-like domain"/>
    <property type="match status" value="1"/>
</dbReference>
<dbReference type="HAMAP" id="MF_00274">
    <property type="entry name" value="DNA_YbaB_EbfC"/>
    <property type="match status" value="1"/>
</dbReference>
<dbReference type="InterPro" id="IPR036894">
    <property type="entry name" value="YbaB-like_sf"/>
</dbReference>
<dbReference type="InterPro" id="IPR004401">
    <property type="entry name" value="YbaB/EbfC"/>
</dbReference>
<dbReference type="NCBIfam" id="TIGR00103">
    <property type="entry name" value="DNA_YbaB_EbfC"/>
    <property type="match status" value="1"/>
</dbReference>
<dbReference type="PANTHER" id="PTHR33449">
    <property type="entry name" value="NUCLEOID-ASSOCIATED PROTEIN YBAB"/>
    <property type="match status" value="1"/>
</dbReference>
<dbReference type="PANTHER" id="PTHR33449:SF1">
    <property type="entry name" value="NUCLEOID-ASSOCIATED PROTEIN YBAB"/>
    <property type="match status" value="1"/>
</dbReference>
<dbReference type="Pfam" id="PF02575">
    <property type="entry name" value="YbaB_DNA_bd"/>
    <property type="match status" value="1"/>
</dbReference>
<dbReference type="PIRSF" id="PIRSF004555">
    <property type="entry name" value="UCP004555"/>
    <property type="match status" value="1"/>
</dbReference>
<dbReference type="SUPFAM" id="SSF82607">
    <property type="entry name" value="YbaB-like"/>
    <property type="match status" value="1"/>
</dbReference>
<organism>
    <name type="scientific">Persephonella marina (strain DSM 14350 / EX-H1)</name>
    <dbReference type="NCBI Taxonomy" id="123214"/>
    <lineage>
        <taxon>Bacteria</taxon>
        <taxon>Pseudomonadati</taxon>
        <taxon>Aquificota</taxon>
        <taxon>Aquificia</taxon>
        <taxon>Aquificales</taxon>
        <taxon>Hydrogenothermaceae</taxon>
        <taxon>Persephonella</taxon>
    </lineage>
</organism>
<sequence>MFNLGNLGEMMKMMKSMQENIEKAKEELRKEEIVVEVGGGMVKVILNGLGEIKDVLIDKTLLTEDNHEILQDLLVAAFNEANRRTKEVMGEKMTQAAGLPSNIPGLGNLF</sequence>
<evidence type="ECO:0000255" key="1">
    <source>
        <dbReference type="HAMAP-Rule" id="MF_00274"/>
    </source>
</evidence>